<evidence type="ECO:0000305" key="1"/>
<proteinExistence type="evidence at protein level"/>
<protein>
    <recommendedName>
        <fullName>L-serine dehydratase, alpha chain</fullName>
        <shortName>SDH</shortName>
        <ecNumber>4.3.1.17</ecNumber>
    </recommendedName>
    <alternativeName>
        <fullName>L-serine deaminase</fullName>
        <shortName>L-SD</shortName>
    </alternativeName>
</protein>
<accession>P80212</accession>
<keyword id="KW-0004">4Fe-4S</keyword>
<keyword id="KW-0903">Direct protein sequencing</keyword>
<keyword id="KW-0312">Gluconeogenesis</keyword>
<keyword id="KW-0408">Iron</keyword>
<keyword id="KW-0411">Iron-sulfur</keyword>
<keyword id="KW-0456">Lyase</keyword>
<keyword id="KW-0479">Metal-binding</keyword>
<name>SDHA_ANAPI</name>
<dbReference type="EC" id="4.3.1.17"/>
<dbReference type="PIR" id="S34761">
    <property type="entry name" value="S34761"/>
</dbReference>
<dbReference type="UniPathway" id="UPA00138"/>
<dbReference type="GO" id="GO:0051539">
    <property type="term" value="F:4 iron, 4 sulfur cluster binding"/>
    <property type="evidence" value="ECO:0007669"/>
    <property type="project" value="UniProtKB-KW"/>
</dbReference>
<dbReference type="GO" id="GO:0003941">
    <property type="term" value="F:L-serine ammonia-lyase activity"/>
    <property type="evidence" value="ECO:0007669"/>
    <property type="project" value="UniProtKB-EC"/>
</dbReference>
<dbReference type="GO" id="GO:0046872">
    <property type="term" value="F:metal ion binding"/>
    <property type="evidence" value="ECO:0007669"/>
    <property type="project" value="UniProtKB-KW"/>
</dbReference>
<dbReference type="GO" id="GO:0006094">
    <property type="term" value="P:gluconeogenesis"/>
    <property type="evidence" value="ECO:0007669"/>
    <property type="project" value="UniProtKB-UniPathway"/>
</dbReference>
<organism>
    <name type="scientific">Anaerotignum propionicum</name>
    <name type="common">Clostridium propionicum</name>
    <dbReference type="NCBI Taxonomy" id="28446"/>
    <lineage>
        <taxon>Bacteria</taxon>
        <taxon>Bacillati</taxon>
        <taxon>Bacillota</taxon>
        <taxon>Clostridia</taxon>
        <taxon>Lachnospirales</taxon>
        <taxon>Anaerotignaceae</taxon>
        <taxon>Anaerotignum</taxon>
    </lineage>
</organism>
<feature type="chain" id="PRO_0000171913" description="L-serine dehydratase, alpha chain">
    <location>
        <begin position="1"/>
        <end position="30" status="greater than"/>
    </location>
</feature>
<feature type="non-terminal residue">
    <location>
        <position position="30"/>
    </location>
</feature>
<comment type="catalytic activity">
    <reaction>
        <text>L-serine = pyruvate + NH4(+)</text>
        <dbReference type="Rhea" id="RHEA:19169"/>
        <dbReference type="ChEBI" id="CHEBI:15361"/>
        <dbReference type="ChEBI" id="CHEBI:28938"/>
        <dbReference type="ChEBI" id="CHEBI:33384"/>
        <dbReference type="EC" id="4.3.1.17"/>
    </reaction>
</comment>
<comment type="cofactor">
    <cofactor>
        <name>[4Fe-4S] cluster</name>
        <dbReference type="ChEBI" id="CHEBI:49883"/>
    </cofactor>
    <text>Binds 1 [4Fe-4S] cluster.</text>
</comment>
<comment type="pathway">
    <text>Carbohydrate biosynthesis; gluconeogenesis.</text>
</comment>
<comment type="subunit">
    <text>Heterodimer of an alpha chain and a beta chain.</text>
</comment>
<comment type="similarity">
    <text evidence="1">Belongs to the iron-sulfur dependent L-serine dehydratase family.</text>
</comment>
<sequence>MKYDSLADLVVQAEKQNVPLXXLIXKDQAE</sequence>
<reference key="1">
    <citation type="journal article" date="1993" name="Eur. J. Biochem.">
        <title>L-serine and L-threonine dehydratase from Clostridium propionicum. Two enzymes with different prosthetic groups.</title>
        <authorList>
            <person name="Hofmeister A.E.M."/>
            <person name="Grabowski R."/>
            <person name="Linder D."/>
            <person name="Buckel W."/>
        </authorList>
    </citation>
    <scope>PROTEIN SEQUENCE</scope>
    <source>
        <strain>ATCC 25522 / DSM 1682 / JCM 1430 / NCIMB 10656 / VPI 5303 / X2</strain>
    </source>
</reference>